<gene>
    <name evidence="1" type="primary">rimM</name>
    <name type="ordered locus">BB_0697</name>
</gene>
<protein>
    <recommendedName>
        <fullName evidence="1">Ribosome maturation factor RimM</fullName>
    </recommendedName>
</protein>
<evidence type="ECO:0000255" key="1">
    <source>
        <dbReference type="HAMAP-Rule" id="MF_00014"/>
    </source>
</evidence>
<reference key="1">
    <citation type="journal article" date="1997" name="Nature">
        <title>Genomic sequence of a Lyme disease spirochaete, Borrelia burgdorferi.</title>
        <authorList>
            <person name="Fraser C.M."/>
            <person name="Casjens S."/>
            <person name="Huang W.M."/>
            <person name="Sutton G.G."/>
            <person name="Clayton R.A."/>
            <person name="Lathigra R."/>
            <person name="White O."/>
            <person name="Ketchum K.A."/>
            <person name="Dodson R.J."/>
            <person name="Hickey E.K."/>
            <person name="Gwinn M.L."/>
            <person name="Dougherty B.A."/>
            <person name="Tomb J.-F."/>
            <person name="Fleischmann R.D."/>
            <person name="Richardson D.L."/>
            <person name="Peterson J.D."/>
            <person name="Kerlavage A.R."/>
            <person name="Quackenbush J."/>
            <person name="Salzberg S.L."/>
            <person name="Hanson M."/>
            <person name="van Vugt R."/>
            <person name="Palmer N."/>
            <person name="Adams M.D."/>
            <person name="Gocayne J.D."/>
            <person name="Weidman J.F."/>
            <person name="Utterback T.R."/>
            <person name="Watthey L."/>
            <person name="McDonald L.A."/>
            <person name="Artiach P."/>
            <person name="Bowman C."/>
            <person name="Garland S.A."/>
            <person name="Fujii C."/>
            <person name="Cotton M.D."/>
            <person name="Horst K."/>
            <person name="Roberts K.M."/>
            <person name="Hatch B."/>
            <person name="Smith H.O."/>
            <person name="Venter J.C."/>
        </authorList>
    </citation>
    <scope>NUCLEOTIDE SEQUENCE [LARGE SCALE GENOMIC DNA]</scope>
    <source>
        <strain>ATCC 35210 / DSM 4680 / CIP 102532 / B31</strain>
    </source>
</reference>
<keyword id="KW-0143">Chaperone</keyword>
<keyword id="KW-0963">Cytoplasm</keyword>
<keyword id="KW-1185">Reference proteome</keyword>
<keyword id="KW-0690">Ribosome biogenesis</keyword>
<keyword id="KW-0698">rRNA processing</keyword>
<proteinExistence type="inferred from homology"/>
<sequence>MFIKGVILSSYGVNGYARVKSISNNFCDFINLKNNKVLLKKSNSSSVEVKVVDVNIKGNSLFLKFEEIDTPEAVRPLIGFELWVDDSLASSLKEGEYYLGKLIGYAIVNNNKKLGEVVAFFEYLNSVFLEVRVGIKFFFIPFLSIYIGDINTQEKTIELKVLDLLK</sequence>
<dbReference type="EMBL" id="AE000783">
    <property type="protein sequence ID" value="AAC67046.1"/>
    <property type="molecule type" value="Genomic_DNA"/>
</dbReference>
<dbReference type="PIR" id="H70186">
    <property type="entry name" value="H70186"/>
</dbReference>
<dbReference type="RefSeq" id="NP_212831.1">
    <property type="nucleotide sequence ID" value="NC_001318.1"/>
</dbReference>
<dbReference type="RefSeq" id="WP_002664616.1">
    <property type="nucleotide sequence ID" value="NC_001318.1"/>
</dbReference>
<dbReference type="SMR" id="O51640"/>
<dbReference type="STRING" id="224326.BB_0697"/>
<dbReference type="PaxDb" id="224326-BB_0697"/>
<dbReference type="EnsemblBacteria" id="AAC67046">
    <property type="protein sequence ID" value="AAC67046"/>
    <property type="gene ID" value="BB_0697"/>
</dbReference>
<dbReference type="KEGG" id="bbu:BB_0697"/>
<dbReference type="PATRIC" id="fig|224326.49.peg.1088"/>
<dbReference type="HOGENOM" id="CLU_077636_3_2_12"/>
<dbReference type="OrthoDB" id="9810331at2"/>
<dbReference type="Proteomes" id="UP000001807">
    <property type="component" value="Chromosome"/>
</dbReference>
<dbReference type="GO" id="GO:0005737">
    <property type="term" value="C:cytoplasm"/>
    <property type="evidence" value="ECO:0007669"/>
    <property type="project" value="UniProtKB-SubCell"/>
</dbReference>
<dbReference type="GO" id="GO:0005840">
    <property type="term" value="C:ribosome"/>
    <property type="evidence" value="ECO:0007669"/>
    <property type="project" value="InterPro"/>
</dbReference>
<dbReference type="GO" id="GO:0043022">
    <property type="term" value="F:ribosome binding"/>
    <property type="evidence" value="ECO:0007669"/>
    <property type="project" value="InterPro"/>
</dbReference>
<dbReference type="GO" id="GO:0042274">
    <property type="term" value="P:ribosomal small subunit biogenesis"/>
    <property type="evidence" value="ECO:0007669"/>
    <property type="project" value="UniProtKB-UniRule"/>
</dbReference>
<dbReference type="GO" id="GO:0006364">
    <property type="term" value="P:rRNA processing"/>
    <property type="evidence" value="ECO:0007669"/>
    <property type="project" value="UniProtKB-UniRule"/>
</dbReference>
<dbReference type="Gene3D" id="2.30.30.240">
    <property type="entry name" value="PRC-barrel domain"/>
    <property type="match status" value="1"/>
</dbReference>
<dbReference type="Gene3D" id="2.40.30.60">
    <property type="entry name" value="RimM"/>
    <property type="match status" value="1"/>
</dbReference>
<dbReference type="HAMAP" id="MF_00014">
    <property type="entry name" value="Ribosome_mat_RimM"/>
    <property type="match status" value="1"/>
</dbReference>
<dbReference type="InterPro" id="IPR027275">
    <property type="entry name" value="PRC-brl_dom"/>
</dbReference>
<dbReference type="InterPro" id="IPR011033">
    <property type="entry name" value="PRC_barrel-like_sf"/>
</dbReference>
<dbReference type="InterPro" id="IPR011961">
    <property type="entry name" value="RimM"/>
</dbReference>
<dbReference type="InterPro" id="IPR002676">
    <property type="entry name" value="RimM_N"/>
</dbReference>
<dbReference type="InterPro" id="IPR036976">
    <property type="entry name" value="RimM_N_sf"/>
</dbReference>
<dbReference type="InterPro" id="IPR009000">
    <property type="entry name" value="Transl_B-barrel_sf"/>
</dbReference>
<dbReference type="NCBIfam" id="TIGR02273">
    <property type="entry name" value="16S_RimM"/>
    <property type="match status" value="1"/>
</dbReference>
<dbReference type="NCBIfam" id="NF011188">
    <property type="entry name" value="PRK14594.1"/>
    <property type="match status" value="1"/>
</dbReference>
<dbReference type="PANTHER" id="PTHR33692">
    <property type="entry name" value="RIBOSOME MATURATION FACTOR RIMM"/>
    <property type="match status" value="1"/>
</dbReference>
<dbReference type="PANTHER" id="PTHR33692:SF1">
    <property type="entry name" value="RIBOSOME MATURATION FACTOR RIMM"/>
    <property type="match status" value="1"/>
</dbReference>
<dbReference type="Pfam" id="PF05239">
    <property type="entry name" value="PRC"/>
    <property type="match status" value="1"/>
</dbReference>
<dbReference type="Pfam" id="PF01782">
    <property type="entry name" value="RimM"/>
    <property type="match status" value="1"/>
</dbReference>
<dbReference type="SUPFAM" id="SSF50346">
    <property type="entry name" value="PRC-barrel domain"/>
    <property type="match status" value="1"/>
</dbReference>
<dbReference type="SUPFAM" id="SSF50447">
    <property type="entry name" value="Translation proteins"/>
    <property type="match status" value="1"/>
</dbReference>
<organism>
    <name type="scientific">Borreliella burgdorferi (strain ATCC 35210 / DSM 4680 / CIP 102532 / B31)</name>
    <name type="common">Borrelia burgdorferi</name>
    <dbReference type="NCBI Taxonomy" id="224326"/>
    <lineage>
        <taxon>Bacteria</taxon>
        <taxon>Pseudomonadati</taxon>
        <taxon>Spirochaetota</taxon>
        <taxon>Spirochaetia</taxon>
        <taxon>Spirochaetales</taxon>
        <taxon>Borreliaceae</taxon>
        <taxon>Borreliella</taxon>
    </lineage>
</organism>
<accession>O51640</accession>
<comment type="function">
    <text evidence="1">An accessory protein needed during the final step in the assembly of 30S ribosomal subunit, possibly for assembly of the head region. Essential for efficient processing of 16S rRNA. May be needed both before and after RbfA during the maturation of 16S rRNA. It has affinity for free ribosomal 30S subunits but not for 70S ribosomes.</text>
</comment>
<comment type="subunit">
    <text evidence="1">Binds ribosomal protein uS19.</text>
</comment>
<comment type="subcellular location">
    <subcellularLocation>
        <location evidence="1">Cytoplasm</location>
    </subcellularLocation>
</comment>
<comment type="domain">
    <text evidence="1">The PRC barrel domain binds ribosomal protein uS19.</text>
</comment>
<comment type="similarity">
    <text evidence="1">Belongs to the RimM family.</text>
</comment>
<name>RIMM_BORBU</name>
<feature type="chain" id="PRO_0000163259" description="Ribosome maturation factor RimM">
    <location>
        <begin position="1"/>
        <end position="166"/>
    </location>
</feature>
<feature type="domain" description="PRC barrel" evidence="1">
    <location>
        <begin position="94"/>
        <end position="166"/>
    </location>
</feature>